<name>RL2_XYLFT</name>
<accession>Q87E79</accession>
<feature type="chain" id="PRO_0000129656" description="Large ribosomal subunit protein uL2">
    <location>
        <begin position="1"/>
        <end position="275"/>
    </location>
</feature>
<feature type="region of interest" description="Disordered" evidence="2">
    <location>
        <begin position="227"/>
        <end position="261"/>
    </location>
</feature>
<organism>
    <name type="scientific">Xylella fastidiosa (strain Temecula1 / ATCC 700964)</name>
    <dbReference type="NCBI Taxonomy" id="183190"/>
    <lineage>
        <taxon>Bacteria</taxon>
        <taxon>Pseudomonadati</taxon>
        <taxon>Pseudomonadota</taxon>
        <taxon>Gammaproteobacteria</taxon>
        <taxon>Lysobacterales</taxon>
        <taxon>Lysobacteraceae</taxon>
        <taxon>Xylella</taxon>
    </lineage>
</organism>
<comment type="function">
    <text evidence="1">One of the primary rRNA binding proteins. Required for association of the 30S and 50S subunits to form the 70S ribosome, for tRNA binding and peptide bond formation. It has been suggested to have peptidyltransferase activity; this is somewhat controversial. Makes several contacts with the 16S rRNA in the 70S ribosome.</text>
</comment>
<comment type="subunit">
    <text evidence="1">Part of the 50S ribosomal subunit. Forms a bridge to the 30S subunit in the 70S ribosome.</text>
</comment>
<comment type="similarity">
    <text evidence="1">Belongs to the universal ribosomal protein uL2 family.</text>
</comment>
<protein>
    <recommendedName>
        <fullName evidence="1">Large ribosomal subunit protein uL2</fullName>
    </recommendedName>
    <alternativeName>
        <fullName evidence="3">50S ribosomal protein L2</fullName>
    </alternativeName>
</protein>
<reference key="1">
    <citation type="journal article" date="2003" name="J. Bacteriol.">
        <title>Comparative analyses of the complete genome sequences of Pierce's disease and citrus variegated chlorosis strains of Xylella fastidiosa.</title>
        <authorList>
            <person name="Van Sluys M.A."/>
            <person name="de Oliveira M.C."/>
            <person name="Monteiro-Vitorello C.B."/>
            <person name="Miyaki C.Y."/>
            <person name="Furlan L.R."/>
            <person name="Camargo L.E.A."/>
            <person name="da Silva A.C.R."/>
            <person name="Moon D.H."/>
            <person name="Takita M.A."/>
            <person name="Lemos E.G.M."/>
            <person name="Machado M.A."/>
            <person name="Ferro M.I.T."/>
            <person name="da Silva F.R."/>
            <person name="Goldman M.H.S."/>
            <person name="Goldman G.H."/>
            <person name="Lemos M.V.F."/>
            <person name="El-Dorry H."/>
            <person name="Tsai S.M."/>
            <person name="Carrer H."/>
            <person name="Carraro D.M."/>
            <person name="de Oliveira R.C."/>
            <person name="Nunes L.R."/>
            <person name="Siqueira W.J."/>
            <person name="Coutinho L.L."/>
            <person name="Kimura E.T."/>
            <person name="Ferro E.S."/>
            <person name="Harakava R."/>
            <person name="Kuramae E.E."/>
            <person name="Marino C.L."/>
            <person name="Giglioti E."/>
            <person name="Abreu I.L."/>
            <person name="Alves L.M.C."/>
            <person name="do Amaral A.M."/>
            <person name="Baia G.S."/>
            <person name="Blanco S.R."/>
            <person name="Brito M.S."/>
            <person name="Cannavan F.S."/>
            <person name="Celestino A.V."/>
            <person name="da Cunha A.F."/>
            <person name="Fenille R.C."/>
            <person name="Ferro J.A."/>
            <person name="Formighieri E.F."/>
            <person name="Kishi L.T."/>
            <person name="Leoni S.G."/>
            <person name="Oliveira A.R."/>
            <person name="Rosa V.E. Jr."/>
            <person name="Sassaki F.T."/>
            <person name="Sena J.A.D."/>
            <person name="de Souza A.A."/>
            <person name="Truffi D."/>
            <person name="Tsukumo F."/>
            <person name="Yanai G.M."/>
            <person name="Zaros L.G."/>
            <person name="Civerolo E.L."/>
            <person name="Simpson A.J.G."/>
            <person name="Almeida N.F. Jr."/>
            <person name="Setubal J.C."/>
            <person name="Kitajima J.P."/>
        </authorList>
    </citation>
    <scope>NUCLEOTIDE SEQUENCE [LARGE SCALE GENOMIC DNA]</scope>
    <source>
        <strain>Temecula1 / ATCC 700964</strain>
    </source>
</reference>
<sequence length="275" mass="30134">MPLIKFKPTSPGRRSAARVVTPNIHKGSPHAALLESQSKTGGRNHHGRITVRHIGGGCKQRYRVIDFKRDKEAIPARVERIEYDPNRTAHIALLCYIDGERCYIIAPKGLKEGDKIISGPNVPIKLGNSLPLRNIPVGTTVHAVELKPRKGAQMARSAGSSVQLVAREGVYATLRLRSGEMRRVLAECRATIGEVGNEEHNLRKLGKAGAKRWLGVRPTVRGAAMNPVDHPHGGGEAKSGQGNPHPVTPWGVPTKGYKTRKNKRTQQFIIRGRRG</sequence>
<evidence type="ECO:0000255" key="1">
    <source>
        <dbReference type="HAMAP-Rule" id="MF_01320"/>
    </source>
</evidence>
<evidence type="ECO:0000256" key="2">
    <source>
        <dbReference type="SAM" id="MobiDB-lite"/>
    </source>
</evidence>
<evidence type="ECO:0000305" key="3"/>
<proteinExistence type="inferred from homology"/>
<keyword id="KW-1185">Reference proteome</keyword>
<keyword id="KW-0687">Ribonucleoprotein</keyword>
<keyword id="KW-0689">Ribosomal protein</keyword>
<keyword id="KW-0694">RNA-binding</keyword>
<keyword id="KW-0699">rRNA-binding</keyword>
<gene>
    <name evidence="1" type="primary">rplB</name>
    <name type="ordered locus">PD_0440</name>
</gene>
<dbReference type="EMBL" id="AE009442">
    <property type="protein sequence ID" value="AAO28319.1"/>
    <property type="molecule type" value="Genomic_DNA"/>
</dbReference>
<dbReference type="RefSeq" id="WP_004090098.1">
    <property type="nucleotide sequence ID" value="NC_004556.1"/>
</dbReference>
<dbReference type="SMR" id="Q87E79"/>
<dbReference type="KEGG" id="xft:PD_0440"/>
<dbReference type="HOGENOM" id="CLU_036235_2_1_6"/>
<dbReference type="Proteomes" id="UP000002516">
    <property type="component" value="Chromosome"/>
</dbReference>
<dbReference type="GO" id="GO:0015934">
    <property type="term" value="C:large ribosomal subunit"/>
    <property type="evidence" value="ECO:0007669"/>
    <property type="project" value="InterPro"/>
</dbReference>
<dbReference type="GO" id="GO:0019843">
    <property type="term" value="F:rRNA binding"/>
    <property type="evidence" value="ECO:0007669"/>
    <property type="project" value="UniProtKB-UniRule"/>
</dbReference>
<dbReference type="GO" id="GO:0003735">
    <property type="term" value="F:structural constituent of ribosome"/>
    <property type="evidence" value="ECO:0007669"/>
    <property type="project" value="InterPro"/>
</dbReference>
<dbReference type="GO" id="GO:0016740">
    <property type="term" value="F:transferase activity"/>
    <property type="evidence" value="ECO:0007669"/>
    <property type="project" value="InterPro"/>
</dbReference>
<dbReference type="GO" id="GO:0002181">
    <property type="term" value="P:cytoplasmic translation"/>
    <property type="evidence" value="ECO:0007669"/>
    <property type="project" value="TreeGrafter"/>
</dbReference>
<dbReference type="FunFam" id="2.30.30.30:FF:000001">
    <property type="entry name" value="50S ribosomal protein L2"/>
    <property type="match status" value="1"/>
</dbReference>
<dbReference type="FunFam" id="2.40.50.140:FF:000003">
    <property type="entry name" value="50S ribosomal protein L2"/>
    <property type="match status" value="1"/>
</dbReference>
<dbReference type="FunFam" id="4.10.950.10:FF:000001">
    <property type="entry name" value="50S ribosomal protein L2"/>
    <property type="match status" value="1"/>
</dbReference>
<dbReference type="Gene3D" id="2.30.30.30">
    <property type="match status" value="1"/>
</dbReference>
<dbReference type="Gene3D" id="2.40.50.140">
    <property type="entry name" value="Nucleic acid-binding proteins"/>
    <property type="match status" value="1"/>
</dbReference>
<dbReference type="Gene3D" id="4.10.950.10">
    <property type="entry name" value="Ribosomal protein L2, domain 3"/>
    <property type="match status" value="1"/>
</dbReference>
<dbReference type="HAMAP" id="MF_01320_B">
    <property type="entry name" value="Ribosomal_uL2_B"/>
    <property type="match status" value="1"/>
</dbReference>
<dbReference type="InterPro" id="IPR012340">
    <property type="entry name" value="NA-bd_OB-fold"/>
</dbReference>
<dbReference type="InterPro" id="IPR014722">
    <property type="entry name" value="Rib_uL2_dom2"/>
</dbReference>
<dbReference type="InterPro" id="IPR002171">
    <property type="entry name" value="Ribosomal_uL2"/>
</dbReference>
<dbReference type="InterPro" id="IPR005880">
    <property type="entry name" value="Ribosomal_uL2_bac/org-type"/>
</dbReference>
<dbReference type="InterPro" id="IPR022669">
    <property type="entry name" value="Ribosomal_uL2_C"/>
</dbReference>
<dbReference type="InterPro" id="IPR022671">
    <property type="entry name" value="Ribosomal_uL2_CS"/>
</dbReference>
<dbReference type="InterPro" id="IPR014726">
    <property type="entry name" value="Ribosomal_uL2_dom3"/>
</dbReference>
<dbReference type="InterPro" id="IPR022666">
    <property type="entry name" value="Ribosomal_uL2_RNA-bd_dom"/>
</dbReference>
<dbReference type="InterPro" id="IPR008991">
    <property type="entry name" value="Translation_prot_SH3-like_sf"/>
</dbReference>
<dbReference type="NCBIfam" id="TIGR01171">
    <property type="entry name" value="rplB_bact"/>
    <property type="match status" value="1"/>
</dbReference>
<dbReference type="PANTHER" id="PTHR13691:SF5">
    <property type="entry name" value="LARGE RIBOSOMAL SUBUNIT PROTEIN UL2M"/>
    <property type="match status" value="1"/>
</dbReference>
<dbReference type="PANTHER" id="PTHR13691">
    <property type="entry name" value="RIBOSOMAL PROTEIN L2"/>
    <property type="match status" value="1"/>
</dbReference>
<dbReference type="Pfam" id="PF00181">
    <property type="entry name" value="Ribosomal_L2"/>
    <property type="match status" value="1"/>
</dbReference>
<dbReference type="Pfam" id="PF03947">
    <property type="entry name" value="Ribosomal_L2_C"/>
    <property type="match status" value="1"/>
</dbReference>
<dbReference type="PIRSF" id="PIRSF002158">
    <property type="entry name" value="Ribosomal_L2"/>
    <property type="match status" value="1"/>
</dbReference>
<dbReference type="SMART" id="SM01383">
    <property type="entry name" value="Ribosomal_L2"/>
    <property type="match status" value="1"/>
</dbReference>
<dbReference type="SMART" id="SM01382">
    <property type="entry name" value="Ribosomal_L2_C"/>
    <property type="match status" value="1"/>
</dbReference>
<dbReference type="SUPFAM" id="SSF50249">
    <property type="entry name" value="Nucleic acid-binding proteins"/>
    <property type="match status" value="1"/>
</dbReference>
<dbReference type="SUPFAM" id="SSF50104">
    <property type="entry name" value="Translation proteins SH3-like domain"/>
    <property type="match status" value="1"/>
</dbReference>
<dbReference type="PROSITE" id="PS00467">
    <property type="entry name" value="RIBOSOMAL_L2"/>
    <property type="match status" value="1"/>
</dbReference>